<organism>
    <name type="scientific">Yersinia pestis bv. Antiqua (strain Antiqua)</name>
    <dbReference type="NCBI Taxonomy" id="360102"/>
    <lineage>
        <taxon>Bacteria</taxon>
        <taxon>Pseudomonadati</taxon>
        <taxon>Pseudomonadota</taxon>
        <taxon>Gammaproteobacteria</taxon>
        <taxon>Enterobacterales</taxon>
        <taxon>Yersiniaceae</taxon>
        <taxon>Yersinia</taxon>
    </lineage>
</organism>
<feature type="chain" id="PRO_1000022252" description="Potassium-transporting ATPase potassium-binding subunit">
    <location>
        <begin position="1"/>
        <end position="562"/>
    </location>
</feature>
<feature type="transmembrane region" description="Helical" evidence="1">
    <location>
        <begin position="6"/>
        <end position="26"/>
    </location>
</feature>
<feature type="transmembrane region" description="Helical" evidence="1">
    <location>
        <begin position="62"/>
        <end position="82"/>
    </location>
</feature>
<feature type="transmembrane region" description="Helical" evidence="1">
    <location>
        <begin position="132"/>
        <end position="152"/>
    </location>
</feature>
<feature type="transmembrane region" description="Helical" evidence="1">
    <location>
        <begin position="175"/>
        <end position="195"/>
    </location>
</feature>
<feature type="transmembrane region" description="Helical" evidence="1">
    <location>
        <begin position="253"/>
        <end position="273"/>
    </location>
</feature>
<feature type="transmembrane region" description="Helical" evidence="1">
    <location>
        <begin position="283"/>
        <end position="303"/>
    </location>
</feature>
<feature type="transmembrane region" description="Helical" evidence="1">
    <location>
        <begin position="327"/>
        <end position="347"/>
    </location>
</feature>
<feature type="transmembrane region" description="Helical" evidence="1">
    <location>
        <begin position="356"/>
        <end position="376"/>
    </location>
</feature>
<feature type="transmembrane region" description="Helical" evidence="1">
    <location>
        <begin position="379"/>
        <end position="399"/>
    </location>
</feature>
<feature type="transmembrane region" description="Helical" evidence="1">
    <location>
        <begin position="416"/>
        <end position="436"/>
    </location>
</feature>
<feature type="transmembrane region" description="Helical" evidence="1">
    <location>
        <begin position="483"/>
        <end position="503"/>
    </location>
</feature>
<feature type="transmembrane region" description="Helical" evidence="1">
    <location>
        <begin position="524"/>
        <end position="544"/>
    </location>
</feature>
<protein>
    <recommendedName>
        <fullName evidence="1">Potassium-transporting ATPase potassium-binding subunit</fullName>
    </recommendedName>
    <alternativeName>
        <fullName evidence="1">ATP phosphohydrolase [potassium-transporting] A chain</fullName>
    </alternativeName>
    <alternativeName>
        <fullName evidence="1">Potassium-binding and translocating subunit A</fullName>
    </alternativeName>
    <alternativeName>
        <fullName evidence="1">Potassium-translocating ATPase A chain</fullName>
    </alternativeName>
</protein>
<sequence length="562" mass="59249">MVASGFLLIASFMLVLFVLSRPLGGFLARLIEGEPFSALQKVEAGLWRCSGVKNAEMNGWQYALAILCFNLLGIVLLFVLLMTQGSLPLNPEHLPGMSWHLALNTAVSFVTNTNWQAYSGENTLSYLSQMAGLTVQNFLSAATGIAVAFALIRAFARHSATTLGNAWVDLVRITLYVLLPIALIIALIFVSQGVLQNLDDYLHITTLEGVQQTLPMGPVASQEAIKVLGTNGGGFFGANSAHPFENPTAFSNFVQMLAIFLIPCALCFAFGQVVGDNRQGHALIWAMSLIFIVAVVVVMYAELAGNPHLSPLGADSNSNMEGKESRFGILATSLYAVVTTAASCGAVNAMHDSFTALGGMIPLWLMQIGEVVFGGVGSGLYGMLLFVLLTVFIAGLMIGRTPEYLGKKIDVFDMKMTALAILVTPTIVLLGTALALCTEAGRAGILNPGAHGFSEVLYALSSAANNNGSAFAGLSVNTPFYNLLLAAAMFIGRFGVILPVLAIASSLVAKKRQPAGNGTLPTGGLLFIGLLIGTVLLVGALTFIPALALGPVAEHLQVWLAH</sequence>
<evidence type="ECO:0000255" key="1">
    <source>
        <dbReference type="HAMAP-Rule" id="MF_00275"/>
    </source>
</evidence>
<keyword id="KW-0997">Cell inner membrane</keyword>
<keyword id="KW-1003">Cell membrane</keyword>
<keyword id="KW-0406">Ion transport</keyword>
<keyword id="KW-0472">Membrane</keyword>
<keyword id="KW-0630">Potassium</keyword>
<keyword id="KW-0633">Potassium transport</keyword>
<keyword id="KW-0812">Transmembrane</keyword>
<keyword id="KW-1133">Transmembrane helix</keyword>
<keyword id="KW-0813">Transport</keyword>
<accession>Q1C585</accession>
<dbReference type="EMBL" id="CP000308">
    <property type="protein sequence ID" value="ABG14387.1"/>
    <property type="molecule type" value="Genomic_DNA"/>
</dbReference>
<dbReference type="RefSeq" id="WP_002209652.1">
    <property type="nucleotide sequence ID" value="NZ_CP009906.1"/>
</dbReference>
<dbReference type="SMR" id="Q1C585"/>
<dbReference type="GeneID" id="57976001"/>
<dbReference type="KEGG" id="ypa:YPA_2422"/>
<dbReference type="Proteomes" id="UP000001971">
    <property type="component" value="Chromosome"/>
</dbReference>
<dbReference type="GO" id="GO:0005886">
    <property type="term" value="C:plasma membrane"/>
    <property type="evidence" value="ECO:0007669"/>
    <property type="project" value="UniProtKB-SubCell"/>
</dbReference>
<dbReference type="GO" id="GO:0008556">
    <property type="term" value="F:P-type potassium transmembrane transporter activity"/>
    <property type="evidence" value="ECO:0007669"/>
    <property type="project" value="InterPro"/>
</dbReference>
<dbReference type="GO" id="GO:0030955">
    <property type="term" value="F:potassium ion binding"/>
    <property type="evidence" value="ECO:0007669"/>
    <property type="project" value="UniProtKB-UniRule"/>
</dbReference>
<dbReference type="HAMAP" id="MF_00275">
    <property type="entry name" value="KdpA"/>
    <property type="match status" value="1"/>
</dbReference>
<dbReference type="InterPro" id="IPR004623">
    <property type="entry name" value="KdpA"/>
</dbReference>
<dbReference type="NCBIfam" id="TIGR00680">
    <property type="entry name" value="kdpA"/>
    <property type="match status" value="1"/>
</dbReference>
<dbReference type="PANTHER" id="PTHR30607">
    <property type="entry name" value="POTASSIUM-TRANSPORTING ATPASE A CHAIN"/>
    <property type="match status" value="1"/>
</dbReference>
<dbReference type="PANTHER" id="PTHR30607:SF2">
    <property type="entry name" value="POTASSIUM-TRANSPORTING ATPASE POTASSIUM-BINDING SUBUNIT"/>
    <property type="match status" value="1"/>
</dbReference>
<dbReference type="Pfam" id="PF03814">
    <property type="entry name" value="KdpA"/>
    <property type="match status" value="1"/>
</dbReference>
<dbReference type="PIRSF" id="PIRSF001294">
    <property type="entry name" value="K_ATPaseA"/>
    <property type="match status" value="1"/>
</dbReference>
<proteinExistence type="inferred from homology"/>
<gene>
    <name evidence="1" type="primary">kdpA</name>
    <name type="ordered locus">YPA_2422</name>
</gene>
<name>KDPA_YERPA</name>
<reference key="1">
    <citation type="journal article" date="2006" name="J. Bacteriol.">
        <title>Complete genome sequence of Yersinia pestis strains Antiqua and Nepal516: evidence of gene reduction in an emerging pathogen.</title>
        <authorList>
            <person name="Chain P.S.G."/>
            <person name="Hu P."/>
            <person name="Malfatti S.A."/>
            <person name="Radnedge L."/>
            <person name="Larimer F."/>
            <person name="Vergez L.M."/>
            <person name="Worsham P."/>
            <person name="Chu M.C."/>
            <person name="Andersen G.L."/>
        </authorList>
    </citation>
    <scope>NUCLEOTIDE SEQUENCE [LARGE SCALE GENOMIC DNA]</scope>
    <source>
        <strain>Antiqua</strain>
    </source>
</reference>
<comment type="function">
    <text evidence="1">Part of the high-affinity ATP-driven potassium transport (or Kdp) system, which catalyzes the hydrolysis of ATP coupled with the electrogenic transport of potassium into the cytoplasm. This subunit binds the periplasmic potassium ions and delivers the ions to the membrane domain of KdpB through an intramembrane tunnel.</text>
</comment>
<comment type="subunit">
    <text evidence="1">The system is composed of three essential subunits: KdpA, KdpB and KdpC.</text>
</comment>
<comment type="subcellular location">
    <subcellularLocation>
        <location evidence="1">Cell inner membrane</location>
        <topology evidence="1">Multi-pass membrane protein</topology>
    </subcellularLocation>
</comment>
<comment type="similarity">
    <text evidence="1">Belongs to the KdpA family.</text>
</comment>